<sequence>MQALLTEILDEVRPLIGQGKVADYIPALAGVVPDQLGIAVYGNDGQLHVAGDARTPFSIQSISKVFSLVQAIGHSGEAIWQRLGHEPSGQPFNSLVQLEFERGKPRNPFINAGALVICDINQSRYAAPALSMRDFVRRLSGNPEVTVDNHVAESEYQHRARNAAAAYLMQSFGNFHNEVEAVLRSYFSCCALRMSCVDLARAFGFLANQGFCQHSGEQILSPRQSKQINAIMATSGLYDEAGNFAYRVGLPGKSGVGGGIVAVVPGQFSVCVWSPELNAAGNSLTGIKALELLSERIGWSVF</sequence>
<feature type="chain" id="PRO_1000048343" description="Glutaminase">
    <location>
        <begin position="1"/>
        <end position="302"/>
    </location>
</feature>
<feature type="binding site" evidence="1">
    <location>
        <position position="61"/>
    </location>
    <ligand>
        <name>substrate</name>
    </ligand>
</feature>
<feature type="binding site" evidence="1">
    <location>
        <position position="111"/>
    </location>
    <ligand>
        <name>substrate</name>
    </ligand>
</feature>
<feature type="binding site" evidence="1">
    <location>
        <position position="155"/>
    </location>
    <ligand>
        <name>substrate</name>
    </ligand>
</feature>
<feature type="binding site" evidence="1">
    <location>
        <position position="162"/>
    </location>
    <ligand>
        <name>substrate</name>
    </ligand>
</feature>
<feature type="binding site" evidence="1">
    <location>
        <position position="186"/>
    </location>
    <ligand>
        <name>substrate</name>
    </ligand>
</feature>
<feature type="binding site" evidence="1">
    <location>
        <position position="238"/>
    </location>
    <ligand>
        <name>substrate</name>
    </ligand>
</feature>
<feature type="binding site" evidence="1">
    <location>
        <position position="256"/>
    </location>
    <ligand>
        <name>substrate</name>
    </ligand>
</feature>
<evidence type="ECO:0000255" key="1">
    <source>
        <dbReference type="HAMAP-Rule" id="MF_00313"/>
    </source>
</evidence>
<name>GLSA_ECTM1</name>
<protein>
    <recommendedName>
        <fullName evidence="1">Glutaminase</fullName>
        <ecNumber evidence="1">3.5.1.2</ecNumber>
    </recommendedName>
</protein>
<proteinExistence type="inferred from homology"/>
<organism>
    <name type="scientific">Ectopseudomonas mendocina (strain ymp)</name>
    <name type="common">Pseudomonas mendocina</name>
    <dbReference type="NCBI Taxonomy" id="399739"/>
    <lineage>
        <taxon>Bacteria</taxon>
        <taxon>Pseudomonadati</taxon>
        <taxon>Pseudomonadota</taxon>
        <taxon>Gammaproteobacteria</taxon>
        <taxon>Pseudomonadales</taxon>
        <taxon>Pseudomonadaceae</taxon>
        <taxon>Ectopseudomonas</taxon>
    </lineage>
</organism>
<keyword id="KW-0378">Hydrolase</keyword>
<dbReference type="EC" id="3.5.1.2" evidence="1"/>
<dbReference type="EMBL" id="CP000680">
    <property type="protein sequence ID" value="ABP82913.1"/>
    <property type="molecule type" value="Genomic_DNA"/>
</dbReference>
<dbReference type="SMR" id="A4XNJ7"/>
<dbReference type="STRING" id="399739.Pmen_0139"/>
<dbReference type="KEGG" id="pmy:Pmen_0139"/>
<dbReference type="PATRIC" id="fig|399739.8.peg.140"/>
<dbReference type="eggNOG" id="COG2066">
    <property type="taxonomic scope" value="Bacteria"/>
</dbReference>
<dbReference type="HOGENOM" id="CLU_027932_1_1_6"/>
<dbReference type="OrthoDB" id="9788822at2"/>
<dbReference type="GO" id="GO:0004359">
    <property type="term" value="F:glutaminase activity"/>
    <property type="evidence" value="ECO:0007669"/>
    <property type="project" value="UniProtKB-UniRule"/>
</dbReference>
<dbReference type="GO" id="GO:0006537">
    <property type="term" value="P:glutamate biosynthetic process"/>
    <property type="evidence" value="ECO:0007669"/>
    <property type="project" value="TreeGrafter"/>
</dbReference>
<dbReference type="GO" id="GO:0006543">
    <property type="term" value="P:glutamine catabolic process"/>
    <property type="evidence" value="ECO:0007669"/>
    <property type="project" value="TreeGrafter"/>
</dbReference>
<dbReference type="FunFam" id="3.40.710.10:FF:000005">
    <property type="entry name" value="Glutaminase"/>
    <property type="match status" value="1"/>
</dbReference>
<dbReference type="Gene3D" id="3.40.710.10">
    <property type="entry name" value="DD-peptidase/beta-lactamase superfamily"/>
    <property type="match status" value="1"/>
</dbReference>
<dbReference type="HAMAP" id="MF_00313">
    <property type="entry name" value="Glutaminase"/>
    <property type="match status" value="1"/>
</dbReference>
<dbReference type="InterPro" id="IPR012338">
    <property type="entry name" value="Beta-lactam/transpept-like"/>
</dbReference>
<dbReference type="InterPro" id="IPR015868">
    <property type="entry name" value="Glutaminase"/>
</dbReference>
<dbReference type="NCBIfam" id="TIGR03814">
    <property type="entry name" value="Gln_ase"/>
    <property type="match status" value="1"/>
</dbReference>
<dbReference type="NCBIfam" id="NF002132">
    <property type="entry name" value="PRK00971.1-1"/>
    <property type="match status" value="1"/>
</dbReference>
<dbReference type="NCBIfam" id="NF002133">
    <property type="entry name" value="PRK00971.1-2"/>
    <property type="match status" value="1"/>
</dbReference>
<dbReference type="PANTHER" id="PTHR12544">
    <property type="entry name" value="GLUTAMINASE"/>
    <property type="match status" value="1"/>
</dbReference>
<dbReference type="PANTHER" id="PTHR12544:SF29">
    <property type="entry name" value="GLUTAMINASE"/>
    <property type="match status" value="1"/>
</dbReference>
<dbReference type="Pfam" id="PF04960">
    <property type="entry name" value="Glutaminase"/>
    <property type="match status" value="1"/>
</dbReference>
<dbReference type="SUPFAM" id="SSF56601">
    <property type="entry name" value="beta-lactamase/transpeptidase-like"/>
    <property type="match status" value="1"/>
</dbReference>
<comment type="catalytic activity">
    <reaction evidence="1">
        <text>L-glutamine + H2O = L-glutamate + NH4(+)</text>
        <dbReference type="Rhea" id="RHEA:15889"/>
        <dbReference type="ChEBI" id="CHEBI:15377"/>
        <dbReference type="ChEBI" id="CHEBI:28938"/>
        <dbReference type="ChEBI" id="CHEBI:29985"/>
        <dbReference type="ChEBI" id="CHEBI:58359"/>
        <dbReference type="EC" id="3.5.1.2"/>
    </reaction>
</comment>
<comment type="subunit">
    <text evidence="1">Homotetramer.</text>
</comment>
<comment type="similarity">
    <text evidence="1">Belongs to the glutaminase family.</text>
</comment>
<gene>
    <name evidence="1" type="primary">glsA</name>
    <name type="ordered locus">Pmen_0139</name>
</gene>
<accession>A4XNJ7</accession>
<reference key="1">
    <citation type="submission" date="2007-04" db="EMBL/GenBank/DDBJ databases">
        <title>Complete sequence of Pseudomonas mendocina ymp.</title>
        <authorList>
            <consortium name="US DOE Joint Genome Institute"/>
            <person name="Copeland A."/>
            <person name="Lucas S."/>
            <person name="Lapidus A."/>
            <person name="Barry K."/>
            <person name="Glavina del Rio T."/>
            <person name="Dalin E."/>
            <person name="Tice H."/>
            <person name="Pitluck S."/>
            <person name="Kiss H."/>
            <person name="Brettin T."/>
            <person name="Detter J.C."/>
            <person name="Bruce D."/>
            <person name="Han C."/>
            <person name="Schmutz J."/>
            <person name="Larimer F."/>
            <person name="Land M."/>
            <person name="Hauser L."/>
            <person name="Kyrpides N."/>
            <person name="Mikhailova N."/>
            <person name="Hersman L."/>
            <person name="Dubois J."/>
            <person name="Maurice P."/>
            <person name="Richardson P."/>
        </authorList>
    </citation>
    <scope>NUCLEOTIDE SEQUENCE [LARGE SCALE GENOMIC DNA]</scope>
    <source>
        <strain>ymp</strain>
    </source>
</reference>